<protein>
    <recommendedName>
        <fullName evidence="3">Voltage-gated potassium channel regulatory subunit KCNG2</fullName>
    </recommendedName>
    <alternativeName>
        <fullName>Potassium channel cKv6.2</fullName>
    </alternativeName>
    <alternativeName>
        <fullName>Potassium voltage-gated channel subfamily G member 2</fullName>
    </alternativeName>
    <alternativeName>
        <fullName>Voltage-gated potassium channel subunit Kv6.2</fullName>
    </alternativeName>
</protein>
<comment type="function">
    <text evidence="3">Regulatory alpha-subunit of the voltage-gated potassium (Kv) channel which, when coassembled with KCNB1, can modulate the kinetics and conductance-voltage relationship. Modulates channel activity by shifting the threshold and the half-maximal activation to more negative values. Potassium channel subunit that does not form functional channels by itself.</text>
</comment>
<comment type="subunit">
    <text evidence="3">Heterodimer with KCNB1.</text>
</comment>
<comment type="subcellular location">
    <subcellularLocation>
        <location evidence="2">Cell membrane</location>
        <topology evidence="1">Multi-pass membrane protein</topology>
    </subcellularLocation>
</comment>
<comment type="similarity">
    <text evidence="5">Belongs to the potassium channel family. G (TC 1.A.1.2) subfamily. Kv6.2/KCNG2 sub-subfamily.</text>
</comment>
<evidence type="ECO:0000250" key="1">
    <source>
        <dbReference type="UniProtKB" id="P63142"/>
    </source>
</evidence>
<evidence type="ECO:0000250" key="2">
    <source>
        <dbReference type="UniProtKB" id="Q14721"/>
    </source>
</evidence>
<evidence type="ECO:0000250" key="3">
    <source>
        <dbReference type="UniProtKB" id="Q9UJ96"/>
    </source>
</evidence>
<evidence type="ECO:0000256" key="4">
    <source>
        <dbReference type="SAM" id="MobiDB-lite"/>
    </source>
</evidence>
<evidence type="ECO:0000305" key="5"/>
<keyword id="KW-1003">Cell membrane</keyword>
<keyword id="KW-0407">Ion channel</keyword>
<keyword id="KW-0406">Ion transport</keyword>
<keyword id="KW-0472">Membrane</keyword>
<keyword id="KW-0630">Potassium</keyword>
<keyword id="KW-0631">Potassium channel</keyword>
<keyword id="KW-0633">Potassium transport</keyword>
<keyword id="KW-1185">Reference proteome</keyword>
<keyword id="KW-0812">Transmembrane</keyword>
<keyword id="KW-1133">Transmembrane helix</keyword>
<keyword id="KW-0813">Transport</keyword>
<keyword id="KW-0851">Voltage-gated channel</keyword>
<dbReference type="EMBL" id="U62139">
    <property type="protein sequence ID" value="AAC06191.1"/>
    <property type="molecule type" value="mRNA"/>
</dbReference>
<dbReference type="RefSeq" id="NP_990370.1">
    <property type="nucleotide sequence ID" value="NM_205039.1"/>
</dbReference>
<dbReference type="RefSeq" id="XP_015131321.1">
    <property type="nucleotide sequence ID" value="XM_015275835.3"/>
</dbReference>
<dbReference type="RefSeq" id="XP_015131322.1">
    <property type="nucleotide sequence ID" value="XM_015275836.4"/>
</dbReference>
<dbReference type="RefSeq" id="XP_015131323.1">
    <property type="nucleotide sequence ID" value="XM_015275837.4"/>
</dbReference>
<dbReference type="RefSeq" id="XP_015131324.1">
    <property type="nucleotide sequence ID" value="XM_015275838.1"/>
</dbReference>
<dbReference type="RefSeq" id="XP_025002810.1">
    <property type="nucleotide sequence ID" value="XM_025147042.3"/>
</dbReference>
<dbReference type="RefSeq" id="XP_040531735.1">
    <property type="nucleotide sequence ID" value="XM_040675801.2"/>
</dbReference>
<dbReference type="RefSeq" id="XP_040531738.1">
    <property type="nucleotide sequence ID" value="XM_040675804.2"/>
</dbReference>
<dbReference type="RefSeq" id="XP_040531742.1">
    <property type="nucleotide sequence ID" value="XM_040675808.2"/>
</dbReference>
<dbReference type="RefSeq" id="XP_046766329.1">
    <property type="nucleotide sequence ID" value="XM_046910373.1"/>
</dbReference>
<dbReference type="RefSeq" id="XP_046766330.1">
    <property type="nucleotide sequence ID" value="XM_046910374.1"/>
</dbReference>
<dbReference type="RefSeq" id="XP_046766331.1">
    <property type="nucleotide sequence ID" value="XM_046910375.1"/>
</dbReference>
<dbReference type="RefSeq" id="XP_046766332.1">
    <property type="nucleotide sequence ID" value="XM_046910376.1"/>
</dbReference>
<dbReference type="RefSeq" id="XP_046766333.1">
    <property type="nucleotide sequence ID" value="XM_046910377.1"/>
</dbReference>
<dbReference type="RefSeq" id="XP_046766334.1">
    <property type="nucleotide sequence ID" value="XM_046910378.1"/>
</dbReference>
<dbReference type="RefSeq" id="XP_046766335.1">
    <property type="nucleotide sequence ID" value="XM_046910379.1"/>
</dbReference>
<dbReference type="RefSeq" id="XP_046766336.1">
    <property type="nucleotide sequence ID" value="XM_046910380.1"/>
</dbReference>
<dbReference type="RefSeq" id="XP_046774600.1">
    <property type="nucleotide sequence ID" value="XM_046918644.1"/>
</dbReference>
<dbReference type="SMR" id="O73606"/>
<dbReference type="STRING" id="9031.ENSGALP00000057198"/>
<dbReference type="PaxDb" id="9031-ENSGALP00000020617"/>
<dbReference type="Ensembl" id="ENSGALT00010019618.1">
    <property type="protein sequence ID" value="ENSGALP00010011166.1"/>
    <property type="gene ID" value="ENSGALG00010008202.1"/>
</dbReference>
<dbReference type="GeneID" id="395902"/>
<dbReference type="KEGG" id="gga:395902"/>
<dbReference type="CTD" id="26251"/>
<dbReference type="VEuPathDB" id="HostDB:geneid_395902"/>
<dbReference type="eggNOG" id="KOG3713">
    <property type="taxonomic scope" value="Eukaryota"/>
</dbReference>
<dbReference type="GeneTree" id="ENSGT00940000160858"/>
<dbReference type="HOGENOM" id="CLU_011722_4_1_1"/>
<dbReference type="InParanoid" id="O73606"/>
<dbReference type="OMA" id="FEREMVF"/>
<dbReference type="OrthoDB" id="296522at2759"/>
<dbReference type="PhylomeDB" id="O73606"/>
<dbReference type="TreeFam" id="TF313103"/>
<dbReference type="Reactome" id="R-GGA-1296072">
    <property type="pathway name" value="Voltage gated Potassium channels"/>
</dbReference>
<dbReference type="Reactome" id="R-GGA-381676">
    <property type="pathway name" value="Glucagon-like Peptide-1 (GLP1) regulates insulin secretion"/>
</dbReference>
<dbReference type="PRO" id="PR:O73606"/>
<dbReference type="Proteomes" id="UP000000539">
    <property type="component" value="Chromosome 2"/>
</dbReference>
<dbReference type="Bgee" id="ENSGALG00000031754">
    <property type="expression patterns" value="Expressed in testis and 11 other cell types or tissues"/>
</dbReference>
<dbReference type="GO" id="GO:0016020">
    <property type="term" value="C:membrane"/>
    <property type="evidence" value="ECO:0000318"/>
    <property type="project" value="GO_Central"/>
</dbReference>
<dbReference type="GO" id="GO:0008076">
    <property type="term" value="C:voltage-gated potassium channel complex"/>
    <property type="evidence" value="ECO:0000318"/>
    <property type="project" value="GO_Central"/>
</dbReference>
<dbReference type="GO" id="GO:0015459">
    <property type="term" value="F:potassium channel regulator activity"/>
    <property type="evidence" value="ECO:0000314"/>
    <property type="project" value="UniProtKB"/>
</dbReference>
<dbReference type="GO" id="GO:0005249">
    <property type="term" value="F:voltage-gated potassium channel activity"/>
    <property type="evidence" value="ECO:0007669"/>
    <property type="project" value="InterPro"/>
</dbReference>
<dbReference type="GO" id="GO:0001508">
    <property type="term" value="P:action potential"/>
    <property type="evidence" value="ECO:0000318"/>
    <property type="project" value="GO_Central"/>
</dbReference>
<dbReference type="GO" id="GO:0071805">
    <property type="term" value="P:potassium ion transmembrane transport"/>
    <property type="evidence" value="ECO:0000318"/>
    <property type="project" value="GO_Central"/>
</dbReference>
<dbReference type="GO" id="GO:0051260">
    <property type="term" value="P:protein homooligomerization"/>
    <property type="evidence" value="ECO:0007669"/>
    <property type="project" value="InterPro"/>
</dbReference>
<dbReference type="GO" id="GO:0043266">
    <property type="term" value="P:regulation of potassium ion transport"/>
    <property type="evidence" value="ECO:0000314"/>
    <property type="project" value="UniProtKB"/>
</dbReference>
<dbReference type="CDD" id="cd18421">
    <property type="entry name" value="BTB_POZ_KCNG1_2"/>
    <property type="match status" value="1"/>
</dbReference>
<dbReference type="FunFam" id="1.20.120.350:FF:000024">
    <property type="entry name" value="Potassium voltage-gated channel subfamily G member 1"/>
    <property type="match status" value="1"/>
</dbReference>
<dbReference type="FunFam" id="1.10.287.70:FF:000005">
    <property type="entry name" value="potassium voltage-gated channel subfamily G member 1"/>
    <property type="match status" value="1"/>
</dbReference>
<dbReference type="FunFam" id="3.30.710.10:FF:000019">
    <property type="entry name" value="Potassium voltage-gated channel, subfamily G, member 1"/>
    <property type="match status" value="1"/>
</dbReference>
<dbReference type="Gene3D" id="1.10.287.70">
    <property type="match status" value="1"/>
</dbReference>
<dbReference type="Gene3D" id="3.30.710.10">
    <property type="entry name" value="Potassium Channel Kv1.1, Chain A"/>
    <property type="match status" value="1"/>
</dbReference>
<dbReference type="Gene3D" id="1.20.120.350">
    <property type="entry name" value="Voltage-gated potassium channels. Chain C"/>
    <property type="match status" value="1"/>
</dbReference>
<dbReference type="InterPro" id="IPR000210">
    <property type="entry name" value="BTB/POZ_dom"/>
</dbReference>
<dbReference type="InterPro" id="IPR005821">
    <property type="entry name" value="Ion_trans_dom"/>
</dbReference>
<dbReference type="InterPro" id="IPR003968">
    <property type="entry name" value="K_chnl_volt-dep_Kv"/>
</dbReference>
<dbReference type="InterPro" id="IPR003969">
    <property type="entry name" value="K_chnl_volt-dep_Kv6"/>
</dbReference>
<dbReference type="InterPro" id="IPR011333">
    <property type="entry name" value="SKP1/BTB/POZ_sf"/>
</dbReference>
<dbReference type="InterPro" id="IPR003131">
    <property type="entry name" value="T1-type_BTB"/>
</dbReference>
<dbReference type="InterPro" id="IPR028325">
    <property type="entry name" value="VG_K_chnl"/>
</dbReference>
<dbReference type="InterPro" id="IPR027359">
    <property type="entry name" value="Volt_channel_dom_sf"/>
</dbReference>
<dbReference type="PANTHER" id="PTHR11537:SF90">
    <property type="entry name" value="POTASSIUM VOLTAGE-GATED CHANNEL SUBFAMILY G MEMBER 2"/>
    <property type="match status" value="1"/>
</dbReference>
<dbReference type="PANTHER" id="PTHR11537">
    <property type="entry name" value="VOLTAGE-GATED POTASSIUM CHANNEL"/>
    <property type="match status" value="1"/>
</dbReference>
<dbReference type="Pfam" id="PF02214">
    <property type="entry name" value="BTB_2"/>
    <property type="match status" value="1"/>
</dbReference>
<dbReference type="Pfam" id="PF00520">
    <property type="entry name" value="Ion_trans"/>
    <property type="match status" value="1"/>
</dbReference>
<dbReference type="PRINTS" id="PR00169">
    <property type="entry name" value="KCHANNEL"/>
</dbReference>
<dbReference type="PRINTS" id="PR01492">
    <property type="entry name" value="KV6CHANNEL"/>
</dbReference>
<dbReference type="PRINTS" id="PR01491">
    <property type="entry name" value="KVCHANNEL"/>
</dbReference>
<dbReference type="SMART" id="SM00225">
    <property type="entry name" value="BTB"/>
    <property type="match status" value="1"/>
</dbReference>
<dbReference type="SUPFAM" id="SSF54695">
    <property type="entry name" value="POZ domain"/>
    <property type="match status" value="1"/>
</dbReference>
<dbReference type="SUPFAM" id="SSF81324">
    <property type="entry name" value="Voltage-gated potassium channels"/>
    <property type="match status" value="1"/>
</dbReference>
<reference key="1">
    <citation type="journal article" date="1998" name="Anal. Biochem.">
        <title>Multiplex display polymerase chain reaction amplifies and resolves related sequences sharing a single moderately conserved domain.</title>
        <authorList>
            <person name="Peale F.V. Jr."/>
            <person name="Mason K."/>
            <person name="Hunter A.W."/>
            <person name="Bothwell M."/>
        </authorList>
    </citation>
    <scope>NUCLEOTIDE SEQUENCE [MRNA]</scope>
    <source>
        <strain>White leghorn</strain>
        <tissue>Cochlear duct</tissue>
    </source>
</reference>
<organism>
    <name type="scientific">Gallus gallus</name>
    <name type="common">Chicken</name>
    <dbReference type="NCBI Taxonomy" id="9031"/>
    <lineage>
        <taxon>Eukaryota</taxon>
        <taxon>Metazoa</taxon>
        <taxon>Chordata</taxon>
        <taxon>Craniata</taxon>
        <taxon>Vertebrata</taxon>
        <taxon>Euteleostomi</taxon>
        <taxon>Archelosauria</taxon>
        <taxon>Archosauria</taxon>
        <taxon>Dinosauria</taxon>
        <taxon>Saurischia</taxon>
        <taxon>Theropoda</taxon>
        <taxon>Coelurosauria</taxon>
        <taxon>Aves</taxon>
        <taxon>Neognathae</taxon>
        <taxon>Galloanserae</taxon>
        <taxon>Galliformes</taxon>
        <taxon>Phasianidae</taxon>
        <taxon>Phasianinae</taxon>
        <taxon>Gallus</taxon>
    </lineage>
</organism>
<feature type="chain" id="PRO_0000054076" description="Voltage-gated potassium channel regulatory subunit KCNG2">
    <location>
        <begin position="1"/>
        <end position="518"/>
    </location>
</feature>
<feature type="topological domain" description="Cytoplasmic" evidence="1">
    <location>
        <begin position="1"/>
        <end position="214"/>
    </location>
</feature>
<feature type="transmembrane region" description="Helical; Name=Segment S1" evidence="1">
    <location>
        <begin position="215"/>
        <end position="236"/>
    </location>
</feature>
<feature type="topological domain" description="Extracellular" evidence="1">
    <location>
        <begin position="237"/>
        <end position="257"/>
    </location>
</feature>
<feature type="transmembrane region" description="Helical; Name=Segment S2" evidence="1">
    <location>
        <begin position="258"/>
        <end position="279"/>
    </location>
</feature>
<feature type="topological domain" description="Cytoplasmic" evidence="1">
    <location>
        <begin position="280"/>
        <end position="290"/>
    </location>
</feature>
<feature type="transmembrane region" description="Helical; Name=Segment S3" evidence="1">
    <location>
        <begin position="291"/>
        <end position="311"/>
    </location>
</feature>
<feature type="topological domain" description="Extracellular" evidence="1">
    <location>
        <begin position="312"/>
        <end position="331"/>
    </location>
</feature>
<feature type="transmembrane region" description="Helical; Voltage-sensor; Name=Segment S4" evidence="1">
    <location>
        <begin position="332"/>
        <end position="352"/>
    </location>
</feature>
<feature type="topological domain" description="Cytoplasmic" evidence="1">
    <location>
        <begin position="353"/>
        <end position="367"/>
    </location>
</feature>
<feature type="transmembrane region" description="Helical; Name=Segment S5" evidence="1">
    <location>
        <begin position="368"/>
        <end position="389"/>
    </location>
</feature>
<feature type="topological domain" description="Extracellular" evidence="1">
    <location>
        <begin position="390"/>
        <end position="404"/>
    </location>
</feature>
<feature type="intramembrane region" description="Helical; Name=Pore helix" evidence="1">
    <location>
        <begin position="405"/>
        <end position="416"/>
    </location>
</feature>
<feature type="intramembrane region" evidence="1">
    <location>
        <begin position="417"/>
        <end position="424"/>
    </location>
</feature>
<feature type="topological domain" description="Extracellular" evidence="1">
    <location>
        <begin position="425"/>
        <end position="431"/>
    </location>
</feature>
<feature type="transmembrane region" description="Helical; Name=Segment S6" evidence="1">
    <location>
        <begin position="432"/>
        <end position="460"/>
    </location>
</feature>
<feature type="topological domain" description="Cytoplasmic" evidence="1">
    <location>
        <begin position="461"/>
        <end position="518"/>
    </location>
</feature>
<feature type="region of interest" description="Disordered" evidence="4">
    <location>
        <begin position="473"/>
        <end position="518"/>
    </location>
</feature>
<feature type="short sequence motif" description="Selectivity filter" evidence="1">
    <location>
        <begin position="417"/>
        <end position="422"/>
    </location>
</feature>
<feature type="compositionally biased region" description="Basic and acidic residues" evidence="4">
    <location>
        <begin position="501"/>
        <end position="518"/>
    </location>
</feature>
<name>KCNG2_CHICK</name>
<gene>
    <name evidence="3" type="primary">KCNG2</name>
</gene>
<proteinExistence type="evidence at transcript level"/>
<accession>O73606</accession>
<sequence>MALLTGNADRAFSSYSFNKLENLCEVQTKKGFFYRKAKLLHPDEDLCYLARLDDRTRFVIINVGGIKYKVPWTTLENCPLTRLGKLKSCNNYDEIMNICDDYDVSCNEFFFDRNPSAFRTIMTFLTAGKLRLLREMCALSFQEELVYWGIEEDHLEWCCKKRLQQKEEEAAEARMYEGEMMFSETTQCAFQDNNWLSLCMRNLRDMVENPHSGIPGKIFACISISFVAITAVSLCISTMPDVREEEDRGECSQKCYDIFVLETVCVAWFSFEFLLRSIQAENKCAFLKTPLNIIDILAILPFYISLIVDMASTKNSSKPGGGAGNKYLERVGLVLRFLRALRILYVMRLARHSLGLQTLGLTVRRCTREFGLLLLFLCVAMALFSPLVYLAESELGAKQEFTSIPTSYWWAVISMTTVGYGDMVPRSIPGQVVALSSILSGILLMAFPVTSIFHTFSRSYSELKEQQQRAASRQMHQLEESTKLAGGGSSQWITAASPPDAAREDGRPELDQEAKRSC</sequence>